<gene>
    <name type="primary">HMX2</name>
</gene>
<dbReference type="EMBL" id="CH471066">
    <property type="protein sequence ID" value="EAW49288.1"/>
    <property type="molecule type" value="Genomic_DNA"/>
</dbReference>
<dbReference type="EMBL" id="BC132758">
    <property type="protein sequence ID" value="AAI32759.1"/>
    <property type="molecule type" value="mRNA"/>
</dbReference>
<dbReference type="EMBL" id="BC137139">
    <property type="protein sequence ID" value="AAI37140.1"/>
    <property type="molecule type" value="mRNA"/>
</dbReference>
<dbReference type="CCDS" id="CCDS31305.1"/>
<dbReference type="RefSeq" id="NP_005510.1">
    <property type="nucleotide sequence ID" value="NM_005519.2"/>
</dbReference>
<dbReference type="RefSeq" id="XP_005269800.1">
    <property type="nucleotide sequence ID" value="XM_005269743.3"/>
</dbReference>
<dbReference type="SMR" id="A2RU54"/>
<dbReference type="BioGRID" id="109410">
    <property type="interactions" value="8"/>
</dbReference>
<dbReference type="FunCoup" id="A2RU54">
    <property type="interactions" value="836"/>
</dbReference>
<dbReference type="IntAct" id="A2RU54">
    <property type="interactions" value="4"/>
</dbReference>
<dbReference type="STRING" id="9606.ENSP00000341108"/>
<dbReference type="iPTMnet" id="A2RU54"/>
<dbReference type="PhosphoSitePlus" id="A2RU54"/>
<dbReference type="BioMuta" id="HMX2"/>
<dbReference type="jPOST" id="A2RU54"/>
<dbReference type="MassIVE" id="A2RU54"/>
<dbReference type="PaxDb" id="9606-ENSP00000341108"/>
<dbReference type="PeptideAtlas" id="A2RU54"/>
<dbReference type="ProteomicsDB" id="500"/>
<dbReference type="TopDownProteomics" id="A2RU54"/>
<dbReference type="Antibodypedia" id="32344">
    <property type="antibodies" value="174 antibodies from 26 providers"/>
</dbReference>
<dbReference type="DNASU" id="3167"/>
<dbReference type="Ensembl" id="ENST00000339992.4">
    <property type="protein sequence ID" value="ENSP00000341108.3"/>
    <property type="gene ID" value="ENSG00000188816.4"/>
</dbReference>
<dbReference type="GeneID" id="3167"/>
<dbReference type="KEGG" id="hsa:3167"/>
<dbReference type="MANE-Select" id="ENST00000339992.4">
    <property type="protein sequence ID" value="ENSP00000341108.3"/>
    <property type="RefSeq nucleotide sequence ID" value="NM_005519.2"/>
    <property type="RefSeq protein sequence ID" value="NP_005510.1"/>
</dbReference>
<dbReference type="UCSC" id="uc001lhc.1">
    <property type="organism name" value="human"/>
</dbReference>
<dbReference type="AGR" id="HGNC:5018"/>
<dbReference type="CTD" id="3167"/>
<dbReference type="DisGeNET" id="3167"/>
<dbReference type="GeneCards" id="HMX2"/>
<dbReference type="HGNC" id="HGNC:5018">
    <property type="gene designation" value="HMX2"/>
</dbReference>
<dbReference type="HPA" id="ENSG00000188816">
    <property type="expression patterns" value="Group enriched (brain, kidney)"/>
</dbReference>
<dbReference type="MIM" id="600647">
    <property type="type" value="gene"/>
</dbReference>
<dbReference type="neXtProt" id="NX_A2RU54"/>
<dbReference type="OpenTargets" id="ENSG00000188816"/>
<dbReference type="PharmGKB" id="PA29345"/>
<dbReference type="VEuPathDB" id="HostDB:ENSG00000188816"/>
<dbReference type="eggNOG" id="KOG0485">
    <property type="taxonomic scope" value="Eukaryota"/>
</dbReference>
<dbReference type="GeneTree" id="ENSGT00940000160392"/>
<dbReference type="HOGENOM" id="CLU_064096_1_0_1"/>
<dbReference type="InParanoid" id="A2RU54"/>
<dbReference type="OMA" id="CTQHQAH"/>
<dbReference type="OrthoDB" id="6159439at2759"/>
<dbReference type="PAN-GO" id="A2RU54">
    <property type="GO annotations" value="4 GO annotations based on evolutionary models"/>
</dbReference>
<dbReference type="PhylomeDB" id="A2RU54"/>
<dbReference type="TreeFam" id="TF320562"/>
<dbReference type="PathwayCommons" id="A2RU54"/>
<dbReference type="SignaLink" id="A2RU54"/>
<dbReference type="BioGRID-ORCS" id="3167">
    <property type="hits" value="11 hits in 1169 CRISPR screens"/>
</dbReference>
<dbReference type="GenomeRNAi" id="3167"/>
<dbReference type="Pharos" id="A2RU54">
    <property type="development level" value="Tbio"/>
</dbReference>
<dbReference type="PRO" id="PR:A2RU54"/>
<dbReference type="Proteomes" id="UP000005640">
    <property type="component" value="Chromosome 10"/>
</dbReference>
<dbReference type="RNAct" id="A2RU54">
    <property type="molecule type" value="protein"/>
</dbReference>
<dbReference type="Bgee" id="ENSG00000188816">
    <property type="expression patterns" value="Expressed in tibialis anterior and 18 other cell types or tissues"/>
</dbReference>
<dbReference type="GO" id="GO:0000785">
    <property type="term" value="C:chromatin"/>
    <property type="evidence" value="ECO:0000247"/>
    <property type="project" value="NTNU_SB"/>
</dbReference>
<dbReference type="GO" id="GO:0005634">
    <property type="term" value="C:nucleus"/>
    <property type="evidence" value="ECO:0000318"/>
    <property type="project" value="GO_Central"/>
</dbReference>
<dbReference type="GO" id="GO:0000981">
    <property type="term" value="F:DNA-binding transcription factor activity, RNA polymerase II-specific"/>
    <property type="evidence" value="ECO:0000247"/>
    <property type="project" value="NTNU_SB"/>
</dbReference>
<dbReference type="GO" id="GO:0000977">
    <property type="term" value="F:RNA polymerase II transcription regulatory region sequence-specific DNA binding"/>
    <property type="evidence" value="ECO:0000318"/>
    <property type="project" value="GO_Central"/>
</dbReference>
<dbReference type="GO" id="GO:1990837">
    <property type="term" value="F:sequence-specific double-stranded DNA binding"/>
    <property type="evidence" value="ECO:0000314"/>
    <property type="project" value="ARUK-UCL"/>
</dbReference>
<dbReference type="GO" id="GO:0007420">
    <property type="term" value="P:brain development"/>
    <property type="evidence" value="ECO:0007669"/>
    <property type="project" value="Ensembl"/>
</dbReference>
<dbReference type="GO" id="GO:0030154">
    <property type="term" value="P:cell differentiation"/>
    <property type="evidence" value="ECO:0007669"/>
    <property type="project" value="UniProtKB-KW"/>
</dbReference>
<dbReference type="GO" id="GO:0050673">
    <property type="term" value="P:epithelial cell proliferation"/>
    <property type="evidence" value="ECO:0007669"/>
    <property type="project" value="Ensembl"/>
</dbReference>
<dbReference type="GO" id="GO:0042472">
    <property type="term" value="P:inner ear morphogenesis"/>
    <property type="evidence" value="ECO:0007669"/>
    <property type="project" value="Ensembl"/>
</dbReference>
<dbReference type="GO" id="GO:0050679">
    <property type="term" value="P:positive regulation of epithelial cell proliferation"/>
    <property type="evidence" value="ECO:0007669"/>
    <property type="project" value="Ensembl"/>
</dbReference>
<dbReference type="GO" id="GO:0048026">
    <property type="term" value="P:positive regulation of mRNA splicing, via spliceosome"/>
    <property type="evidence" value="ECO:0007669"/>
    <property type="project" value="Ensembl"/>
</dbReference>
<dbReference type="GO" id="GO:2000648">
    <property type="term" value="P:positive regulation of stem cell proliferation"/>
    <property type="evidence" value="ECO:0007669"/>
    <property type="project" value="Ensembl"/>
</dbReference>
<dbReference type="GO" id="GO:0006357">
    <property type="term" value="P:regulation of transcription by RNA polymerase II"/>
    <property type="evidence" value="ECO:0000318"/>
    <property type="project" value="GO_Central"/>
</dbReference>
<dbReference type="GO" id="GO:0072089">
    <property type="term" value="P:stem cell proliferation"/>
    <property type="evidence" value="ECO:0007669"/>
    <property type="project" value="Ensembl"/>
</dbReference>
<dbReference type="CDD" id="cd00086">
    <property type="entry name" value="homeodomain"/>
    <property type="match status" value="1"/>
</dbReference>
<dbReference type="FunFam" id="1.10.10.60:FF:000053">
    <property type="entry name" value="H6 family homeobox 2"/>
    <property type="match status" value="1"/>
</dbReference>
<dbReference type="Gene3D" id="1.10.10.60">
    <property type="entry name" value="Homeodomain-like"/>
    <property type="match status" value="1"/>
</dbReference>
<dbReference type="InterPro" id="IPR001356">
    <property type="entry name" value="HD"/>
</dbReference>
<dbReference type="InterPro" id="IPR020479">
    <property type="entry name" value="HD_metazoa"/>
</dbReference>
<dbReference type="InterPro" id="IPR051300">
    <property type="entry name" value="HMX_Homeobox_TF"/>
</dbReference>
<dbReference type="InterPro" id="IPR017970">
    <property type="entry name" value="Homeobox_CS"/>
</dbReference>
<dbReference type="InterPro" id="IPR009057">
    <property type="entry name" value="Homeodomain-like_sf"/>
</dbReference>
<dbReference type="PANTHER" id="PTHR46110">
    <property type="entry name" value="HOMEOBOX PROTEIN HMX"/>
    <property type="match status" value="1"/>
</dbReference>
<dbReference type="PANTHER" id="PTHR46110:SF4">
    <property type="entry name" value="HOMEOBOX PROTEIN HMX2"/>
    <property type="match status" value="1"/>
</dbReference>
<dbReference type="Pfam" id="PF00046">
    <property type="entry name" value="Homeodomain"/>
    <property type="match status" value="1"/>
</dbReference>
<dbReference type="PRINTS" id="PR00024">
    <property type="entry name" value="HOMEOBOX"/>
</dbReference>
<dbReference type="SMART" id="SM00389">
    <property type="entry name" value="HOX"/>
    <property type="match status" value="1"/>
</dbReference>
<dbReference type="SUPFAM" id="SSF46689">
    <property type="entry name" value="Homeodomain-like"/>
    <property type="match status" value="1"/>
</dbReference>
<dbReference type="PROSITE" id="PS00027">
    <property type="entry name" value="HOMEOBOX_1"/>
    <property type="match status" value="1"/>
</dbReference>
<dbReference type="PROSITE" id="PS50071">
    <property type="entry name" value="HOMEOBOX_2"/>
    <property type="match status" value="1"/>
</dbReference>
<protein>
    <recommendedName>
        <fullName>Homeobox protein HMX2</fullName>
    </recommendedName>
    <alternativeName>
        <fullName>Homeobox protein H6 family member 2</fullName>
    </alternativeName>
</protein>
<keyword id="KW-0217">Developmental protein</keyword>
<keyword id="KW-0221">Differentiation</keyword>
<keyword id="KW-0238">DNA-binding</keyword>
<keyword id="KW-0371">Homeobox</keyword>
<keyword id="KW-0524">Neurogenesis</keyword>
<keyword id="KW-0539">Nucleus</keyword>
<keyword id="KW-1267">Proteomics identification</keyword>
<keyword id="KW-1185">Reference proteome</keyword>
<keyword id="KW-0804">Transcription</keyword>
<keyword id="KW-0805">Transcription regulation</keyword>
<sequence>MGSKEDAGKGCPAAGGVSSFTIQSILGGGPSEAPREPVGWPARKRSLSVSSEEEEPDDGWKAPACFCPDQHGPKEQGPKHHPPIPFPCLGTPKGSGGSGPGGLERTPFLSPSHSDFKEEKERLLPAGSPSPGSERPRDGGAERQAGAAKKKTRTVFSRSQVYQLESTFDMKRYLSSSERACLASSLQLTETQVKTWFQNRRNKWKRQLSAELEAANMAHASAQTLVSMPLVFRDSSLLRVPVPRSLAFPAPLYYPGSNLSALPLYNLYNKLDY</sequence>
<reference key="1">
    <citation type="submission" date="2005-09" db="EMBL/GenBank/DDBJ databases">
        <authorList>
            <person name="Mural R.J."/>
            <person name="Istrail S."/>
            <person name="Sutton G.G."/>
            <person name="Florea L."/>
            <person name="Halpern A.L."/>
            <person name="Mobarry C.M."/>
            <person name="Lippert R."/>
            <person name="Walenz B."/>
            <person name="Shatkay H."/>
            <person name="Dew I."/>
            <person name="Miller J.R."/>
            <person name="Flanigan M.J."/>
            <person name="Edwards N.J."/>
            <person name="Bolanos R."/>
            <person name="Fasulo D."/>
            <person name="Halldorsson B.V."/>
            <person name="Hannenhalli S."/>
            <person name="Turner R."/>
            <person name="Yooseph S."/>
            <person name="Lu F."/>
            <person name="Nusskern D.R."/>
            <person name="Shue B.C."/>
            <person name="Zheng X.H."/>
            <person name="Zhong F."/>
            <person name="Delcher A.L."/>
            <person name="Huson D.H."/>
            <person name="Kravitz S.A."/>
            <person name="Mouchard L."/>
            <person name="Reinert K."/>
            <person name="Remington K.A."/>
            <person name="Clark A.G."/>
            <person name="Waterman M.S."/>
            <person name="Eichler E.E."/>
            <person name="Adams M.D."/>
            <person name="Hunkapiller M.W."/>
            <person name="Myers E.W."/>
            <person name="Venter J.C."/>
        </authorList>
    </citation>
    <scope>NUCLEOTIDE SEQUENCE [LARGE SCALE GENOMIC DNA]</scope>
</reference>
<reference key="2">
    <citation type="journal article" date="2004" name="Genome Res.">
        <title>The status, quality, and expansion of the NIH full-length cDNA project: the Mammalian Gene Collection (MGC).</title>
        <authorList>
            <consortium name="The MGC Project Team"/>
        </authorList>
    </citation>
    <scope>NUCLEOTIDE SEQUENCE [LARGE SCALE MRNA]</scope>
    <source>
        <tissue>Testis</tissue>
    </source>
</reference>
<feature type="chain" id="PRO_0000294366" description="Homeobox protein HMX2">
    <location>
        <begin position="1"/>
        <end position="273"/>
    </location>
</feature>
<feature type="DNA-binding region" description="Homeobox" evidence="2">
    <location>
        <begin position="149"/>
        <end position="208"/>
    </location>
</feature>
<feature type="region of interest" description="Disordered" evidence="3">
    <location>
        <begin position="1"/>
        <end position="152"/>
    </location>
</feature>
<feature type="compositionally biased region" description="Gly residues" evidence="3">
    <location>
        <begin position="93"/>
        <end position="102"/>
    </location>
</feature>
<feature type="compositionally biased region" description="Basic and acidic residues" evidence="3">
    <location>
        <begin position="114"/>
        <end position="123"/>
    </location>
</feature>
<name>HMX2_HUMAN</name>
<comment type="function">
    <text evidence="1">Transcription factor involved in specification of neuronal cell types and which is required for inner ear and hypothalamus development.</text>
</comment>
<comment type="subcellular location">
    <subcellularLocation>
        <location evidence="2">Nucleus</location>
    </subcellularLocation>
</comment>
<comment type="similarity">
    <text evidence="4">Belongs to the HMX homeobox family.</text>
</comment>
<proteinExistence type="evidence at protein level"/>
<evidence type="ECO:0000250" key="1"/>
<evidence type="ECO:0000255" key="2">
    <source>
        <dbReference type="PROSITE-ProRule" id="PRU00108"/>
    </source>
</evidence>
<evidence type="ECO:0000256" key="3">
    <source>
        <dbReference type="SAM" id="MobiDB-lite"/>
    </source>
</evidence>
<evidence type="ECO:0000305" key="4"/>
<organism>
    <name type="scientific">Homo sapiens</name>
    <name type="common">Human</name>
    <dbReference type="NCBI Taxonomy" id="9606"/>
    <lineage>
        <taxon>Eukaryota</taxon>
        <taxon>Metazoa</taxon>
        <taxon>Chordata</taxon>
        <taxon>Craniata</taxon>
        <taxon>Vertebrata</taxon>
        <taxon>Euteleostomi</taxon>
        <taxon>Mammalia</taxon>
        <taxon>Eutheria</taxon>
        <taxon>Euarchontoglires</taxon>
        <taxon>Primates</taxon>
        <taxon>Haplorrhini</taxon>
        <taxon>Catarrhini</taxon>
        <taxon>Hominidae</taxon>
        <taxon>Homo</taxon>
    </lineage>
</organism>
<accession>A2RU54</accession>
<accession>B2RNV5</accession>